<sequence>MRGGGFVQIFKDFSNWSTVAVVPHVANANNKISRIFWIAIFLFVLGMFAYELYILIAKFFSYPATVNTEILFEKQIFPVVTVCNMNPYKYSVVKSNSAFSSVNTLMTTYSDATVGTFSTDKWGLYADNDETYDLDSRAADALVLEANLISDTAKVPALYTYADLIQDCSFAGIPCSESDFTKFIDPVYGACYSFNEDASLNYSVSREGIQFGLKLMLTVTQTKTNGNTDSLPTTKLAGARIGVNSRGSSPGLDSNGIDAGVGYESAVSVSLTQNVRAKKPYGTCVDREPDSSDYYKDFIYTLETCFNGCKQRDTIAKCQCANPRLALGSTDTACQPIKADLDCLQTLKGNQTSSTPNIDLLVECNCNPPCDESTYTPTVSLAQFPSTSYYVATSSTAGVGSCSSTNSKFSSKSDCQKWYNNNGMIIQVFLETLSYELYTETAGYTVSNVINDLGGQAGLWLGLSVISVVEMTGLMLVMGAFCVTGGAIKMAPDDDEIENDHRIKDVEDVKKEIDHLEKKHGEMESGSDGEVDDIENKGDEEKKKK</sequence>
<feature type="chain" id="PRO_0000181313" description="Degenerin-like protein asic-2">
    <location>
        <begin position="1"/>
        <end position="545"/>
    </location>
</feature>
<feature type="topological domain" description="Cytoplasmic" evidence="3">
    <location>
        <begin position="1"/>
        <end position="34"/>
    </location>
</feature>
<feature type="transmembrane region" description="Helical" evidence="3">
    <location>
        <begin position="35"/>
        <end position="55"/>
    </location>
</feature>
<feature type="topological domain" description="Extracellular" evidence="3">
    <location>
        <begin position="56"/>
        <end position="457"/>
    </location>
</feature>
<feature type="transmembrane region" description="Helical" evidence="3">
    <location>
        <begin position="458"/>
        <end position="478"/>
    </location>
</feature>
<feature type="topological domain" description="Cytoplasmic" evidence="3">
    <location>
        <begin position="479"/>
        <end position="545"/>
    </location>
</feature>
<feature type="region of interest" description="Disordered" evidence="4">
    <location>
        <begin position="514"/>
        <end position="545"/>
    </location>
</feature>
<feature type="short sequence motif" description="GAS motif; ion selectivity filter" evidence="1">
    <location>
        <begin position="462"/>
        <end position="464"/>
    </location>
</feature>
<feature type="compositionally biased region" description="Basic and acidic residues" evidence="4">
    <location>
        <begin position="514"/>
        <end position="523"/>
    </location>
</feature>
<feature type="compositionally biased region" description="Basic and acidic residues" evidence="4">
    <location>
        <begin position="534"/>
        <end position="545"/>
    </location>
</feature>
<feature type="glycosylation site" description="N-linked (GlcNAc...) asparagine" evidence="3">
    <location>
        <position position="201"/>
    </location>
</feature>
<feature type="glycosylation site" description="N-linked (GlcNAc...) asparagine" evidence="3">
    <location>
        <position position="350"/>
    </location>
</feature>
<feature type="disulfide bond" evidence="2">
    <location>
        <begin position="83"/>
        <end position="191"/>
    </location>
</feature>
<feature type="disulfide bond" evidence="2">
    <location>
        <begin position="284"/>
        <end position="370"/>
    </location>
</feature>
<feature type="disulfide bond" evidence="2">
    <location>
        <begin position="305"/>
        <end position="366"/>
    </location>
</feature>
<feature type="disulfide bond" evidence="2">
    <location>
        <begin position="309"/>
        <end position="364"/>
    </location>
</feature>
<feature type="disulfide bond" evidence="2">
    <location>
        <begin position="318"/>
        <end position="343"/>
    </location>
</feature>
<feature type="disulfide bond" evidence="2">
    <location>
        <begin position="320"/>
        <end position="334"/>
    </location>
</feature>
<comment type="function">
    <text evidence="2">Could form pH-gated heterotrimeric sodium channels that act as postsynaptic excitatory sensors in the nervous system, generating rapid, transient inward currents that fully desensitize upon extracellular acidification.</text>
</comment>
<comment type="catalytic activity">
    <reaction evidence="2">
        <text>Na(+)(in) = Na(+)(out)</text>
        <dbReference type="Rhea" id="RHEA:34963"/>
        <dbReference type="ChEBI" id="CHEBI:29101"/>
    </reaction>
</comment>
<comment type="activity regulation">
    <text evidence="2">Inhibited by the diuretic drug amiloride.</text>
</comment>
<comment type="subunit">
    <text evidence="2">Can form homotrimers. Heterotrimer; forms functional heterotrimers producing channel with different properties.</text>
</comment>
<comment type="subcellular location">
    <subcellularLocation>
        <location evidence="2">Cell membrane</location>
        <topology evidence="2">Multi-pass membrane protein</topology>
    </subcellularLocation>
</comment>
<comment type="similarity">
    <text evidence="5">Belongs to the amiloride-sensitive sodium channel (TC 1.A.6) family.</text>
</comment>
<dbReference type="EMBL" id="Z72517">
    <property type="protein sequence ID" value="CAA96693.1"/>
    <property type="molecule type" value="Genomic_DNA"/>
</dbReference>
<dbReference type="PIR" id="T25429">
    <property type="entry name" value="T25429"/>
</dbReference>
<dbReference type="RefSeq" id="NP_492099.1">
    <property type="nucleotide sequence ID" value="NM_059698.3"/>
</dbReference>
<dbReference type="SMR" id="Q22851"/>
<dbReference type="BioGRID" id="53709">
    <property type="interactions" value="1"/>
</dbReference>
<dbReference type="STRING" id="6239.T28F4.2.1"/>
<dbReference type="GlyCosmos" id="Q22851">
    <property type="glycosylation" value="2 sites, No reported glycans"/>
</dbReference>
<dbReference type="PaxDb" id="6239-T28F4.2"/>
<dbReference type="EnsemblMetazoa" id="T28F4.2.1">
    <property type="protein sequence ID" value="T28F4.2.1"/>
    <property type="gene ID" value="WBGene00012137"/>
</dbReference>
<dbReference type="GeneID" id="189058"/>
<dbReference type="KEGG" id="cel:CELE_T28F4.2"/>
<dbReference type="UCSC" id="T28F4.2">
    <property type="organism name" value="c. elegans"/>
</dbReference>
<dbReference type="AGR" id="WB:WBGene00012137"/>
<dbReference type="CTD" id="189058"/>
<dbReference type="WormBase" id="T28F4.2">
    <property type="protein sequence ID" value="CE06524"/>
    <property type="gene ID" value="WBGene00012137"/>
    <property type="gene designation" value="asic-2"/>
</dbReference>
<dbReference type="eggNOG" id="KOG4294">
    <property type="taxonomic scope" value="Eukaryota"/>
</dbReference>
<dbReference type="HOGENOM" id="CLU_020415_3_1_1"/>
<dbReference type="InParanoid" id="Q22851"/>
<dbReference type="OMA" id="KLMLTVT"/>
<dbReference type="OrthoDB" id="6021021at2759"/>
<dbReference type="PhylomeDB" id="Q22851"/>
<dbReference type="Reactome" id="R-CEL-2672351">
    <property type="pathway name" value="Stimuli-sensing channels"/>
</dbReference>
<dbReference type="Reactome" id="R-CEL-9730628">
    <property type="pathway name" value="Sensory perception of salty taste"/>
</dbReference>
<dbReference type="PRO" id="PR:Q22851"/>
<dbReference type="Proteomes" id="UP000001940">
    <property type="component" value="Chromosome I"/>
</dbReference>
<dbReference type="Bgee" id="WBGene00012137">
    <property type="expression patterns" value="Expressed in pharyngeal muscle cell (C elegans) and 2 other cell types or tissues"/>
</dbReference>
<dbReference type="GO" id="GO:0005886">
    <property type="term" value="C:plasma membrane"/>
    <property type="evidence" value="ECO:0000250"/>
    <property type="project" value="UniProtKB"/>
</dbReference>
<dbReference type="GO" id="GO:0015280">
    <property type="term" value="F:ligand-gated sodium channel activity"/>
    <property type="evidence" value="ECO:0000318"/>
    <property type="project" value="GO_Central"/>
</dbReference>
<dbReference type="GO" id="GO:0160125">
    <property type="term" value="F:pH-gated sodium channel activity"/>
    <property type="evidence" value="ECO:0000250"/>
    <property type="project" value="UniProtKB"/>
</dbReference>
<dbReference type="GO" id="GO:0035725">
    <property type="term" value="P:sodium ion transmembrane transport"/>
    <property type="evidence" value="ECO:0000318"/>
    <property type="project" value="GO_Central"/>
</dbReference>
<dbReference type="Gene3D" id="2.60.470.10">
    <property type="entry name" value="Acid-sensing ion channels like domains"/>
    <property type="match status" value="1"/>
</dbReference>
<dbReference type="Gene3D" id="1.10.287.770">
    <property type="entry name" value="YojJ-like"/>
    <property type="match status" value="1"/>
</dbReference>
<dbReference type="InterPro" id="IPR001873">
    <property type="entry name" value="ENaC"/>
</dbReference>
<dbReference type="InterPro" id="IPR020903">
    <property type="entry name" value="ENaC_CS"/>
</dbReference>
<dbReference type="PANTHER" id="PTHR11690">
    <property type="entry name" value="AMILORIDE-SENSITIVE SODIUM CHANNEL-RELATED"/>
    <property type="match status" value="1"/>
</dbReference>
<dbReference type="PANTHER" id="PTHR11690:SF269">
    <property type="entry name" value="DEGENERIN-LIKE PROTEIN ASIC-2"/>
    <property type="match status" value="1"/>
</dbReference>
<dbReference type="Pfam" id="PF00858">
    <property type="entry name" value="ASC"/>
    <property type="match status" value="1"/>
</dbReference>
<dbReference type="PRINTS" id="PR01078">
    <property type="entry name" value="AMINACHANNEL"/>
</dbReference>
<dbReference type="PROSITE" id="PS01206">
    <property type="entry name" value="ASC"/>
    <property type="match status" value="1"/>
</dbReference>
<proteinExistence type="inferred from homology"/>
<evidence type="ECO:0000250" key="1">
    <source>
        <dbReference type="UniProtKB" id="P78348"/>
    </source>
</evidence>
<evidence type="ECO:0000250" key="2">
    <source>
        <dbReference type="UniProtKB" id="Q16515"/>
    </source>
</evidence>
<evidence type="ECO:0000255" key="3"/>
<evidence type="ECO:0000256" key="4">
    <source>
        <dbReference type="SAM" id="MobiDB-lite"/>
    </source>
</evidence>
<evidence type="ECO:0000305" key="5"/>
<keyword id="KW-1003">Cell membrane</keyword>
<keyword id="KW-1015">Disulfide bond</keyword>
<keyword id="KW-0325">Glycoprotein</keyword>
<keyword id="KW-0407">Ion channel</keyword>
<keyword id="KW-0406">Ion transport</keyword>
<keyword id="KW-0472">Membrane</keyword>
<keyword id="KW-1185">Reference proteome</keyword>
<keyword id="KW-0915">Sodium</keyword>
<keyword id="KW-0894">Sodium channel</keyword>
<keyword id="KW-0739">Sodium transport</keyword>
<keyword id="KW-0812">Transmembrane</keyword>
<keyword id="KW-1133">Transmembrane helix</keyword>
<keyword id="KW-0813">Transport</keyword>
<organism>
    <name type="scientific">Caenorhabditis elegans</name>
    <dbReference type="NCBI Taxonomy" id="6239"/>
    <lineage>
        <taxon>Eukaryota</taxon>
        <taxon>Metazoa</taxon>
        <taxon>Ecdysozoa</taxon>
        <taxon>Nematoda</taxon>
        <taxon>Chromadorea</taxon>
        <taxon>Rhabditida</taxon>
        <taxon>Rhabditina</taxon>
        <taxon>Rhabditomorpha</taxon>
        <taxon>Rhabditoidea</taxon>
        <taxon>Rhabditidae</taxon>
        <taxon>Peloderinae</taxon>
        <taxon>Caenorhabditis</taxon>
    </lineage>
</organism>
<gene>
    <name type="primary">asic-2</name>
    <name type="ORF">T28F4.2</name>
</gene>
<accession>Q22851</accession>
<name>ASIC2_CAEEL</name>
<protein>
    <recommendedName>
        <fullName>Degenerin-like protein asic-2</fullName>
    </recommendedName>
    <alternativeName>
        <fullName>Acid-sensing/amiloride-sensitive ion channel protein 2</fullName>
    </alternativeName>
</protein>
<reference key="1">
    <citation type="journal article" date="1998" name="Science">
        <title>Genome sequence of the nematode C. elegans: a platform for investigating biology.</title>
        <authorList>
            <consortium name="The C. elegans sequencing consortium"/>
        </authorList>
    </citation>
    <scope>NUCLEOTIDE SEQUENCE [LARGE SCALE GENOMIC DNA]</scope>
    <source>
        <strain>Bristol N2</strain>
    </source>
</reference>